<evidence type="ECO:0000250" key="1">
    <source>
        <dbReference type="UniProtKB" id="A6QPQ5"/>
    </source>
</evidence>
<evidence type="ECO:0000255" key="2"/>
<evidence type="ECO:0000269" key="3">
    <source>
    </source>
</evidence>
<evidence type="ECO:0000303" key="4">
    <source>
    </source>
</evidence>
<evidence type="ECO:0000305" key="5"/>
<evidence type="ECO:0000305" key="6">
    <source>
    </source>
</evidence>
<evidence type="ECO:0000305" key="7">
    <source>
    </source>
</evidence>
<dbReference type="EMBL" id="AF212225">
    <property type="protein sequence ID" value="AAF87327.1"/>
    <property type="status" value="ALT_SEQ"/>
    <property type="molecule type" value="mRNA"/>
</dbReference>
<dbReference type="EMBL" id="AC112225">
    <property type="protein sequence ID" value="AAY41057.1"/>
    <property type="status" value="ALT_SEQ"/>
    <property type="molecule type" value="Genomic_DNA"/>
</dbReference>
<dbReference type="EMBL" id="AC114801">
    <property type="status" value="NOT_ANNOTATED_CDS"/>
    <property type="molecule type" value="Genomic_DNA"/>
</dbReference>
<dbReference type="EMBL" id="CH471057">
    <property type="protein sequence ID" value="EAX05820.1"/>
    <property type="molecule type" value="Genomic_DNA"/>
</dbReference>
<dbReference type="EMBL" id="BC014356">
    <property type="protein sequence ID" value="AAH14356.1"/>
    <property type="status" value="ALT_INIT"/>
    <property type="molecule type" value="mRNA"/>
</dbReference>
<dbReference type="EMBL" id="BC015109">
    <property type="protein sequence ID" value="AAH15109.1"/>
    <property type="status" value="ALT_INIT"/>
    <property type="molecule type" value="mRNA"/>
</dbReference>
<dbReference type="EMBL" id="BC032595">
    <property type="protein sequence ID" value="AAH32595.1"/>
    <property type="status" value="ALT_INIT"/>
    <property type="molecule type" value="mRNA"/>
</dbReference>
<dbReference type="EMBL" id="AB049474">
    <property type="protein sequence ID" value="BAB40180.1"/>
    <property type="status" value="ALT_SEQ"/>
    <property type="molecule type" value="mRNA"/>
</dbReference>
<dbReference type="EMBL" id="CR457191">
    <property type="protein sequence ID" value="CAG33472.1"/>
    <property type="molecule type" value="mRNA"/>
</dbReference>
<dbReference type="EMBL" id="AK024791">
    <property type="protein sequence ID" value="BAB15005.1"/>
    <property type="status" value="ALT_INIT"/>
    <property type="molecule type" value="mRNA"/>
</dbReference>
<dbReference type="CCDS" id="CCDS3583.2"/>
<dbReference type="RefSeq" id="NP_064621.3">
    <property type="nucleotide sequence ID" value="NM_020236.3"/>
</dbReference>
<dbReference type="RefSeq" id="XP_011530500.1">
    <property type="nucleotide sequence ID" value="XM_011532198.2"/>
</dbReference>
<dbReference type="RefSeq" id="XP_011530501.1">
    <property type="nucleotide sequence ID" value="XM_011532199.1"/>
</dbReference>
<dbReference type="RefSeq" id="XP_054206708.1">
    <property type="nucleotide sequence ID" value="XM_054350733.1"/>
</dbReference>
<dbReference type="PDB" id="7A5K">
    <property type="method" value="EM"/>
    <property type="resolution" value="3.70 A"/>
    <property type="chains" value="n=23-308"/>
</dbReference>
<dbReference type="PDB" id="7QI4">
    <property type="method" value="EM"/>
    <property type="resolution" value="2.21 A"/>
    <property type="chains" value="z=1-325"/>
</dbReference>
<dbReference type="PDB" id="7QI5">
    <property type="method" value="EM"/>
    <property type="resolution" value="2.63 A"/>
    <property type="chains" value="z=1-325"/>
</dbReference>
<dbReference type="PDB" id="7QI6">
    <property type="method" value="EM"/>
    <property type="resolution" value="2.98 A"/>
    <property type="chains" value="z=1-325"/>
</dbReference>
<dbReference type="PDB" id="8ANY">
    <property type="method" value="EM"/>
    <property type="resolution" value="2.85 A"/>
    <property type="chains" value="z=1-325"/>
</dbReference>
<dbReference type="PDB" id="8OIR">
    <property type="method" value="EM"/>
    <property type="resolution" value="3.10 A"/>
    <property type="chains" value="Bj=1-325"/>
</dbReference>
<dbReference type="PDB" id="8OIT">
    <property type="method" value="EM"/>
    <property type="resolution" value="2.90 A"/>
    <property type="chains" value="Bj=1-325"/>
</dbReference>
<dbReference type="PDB" id="8RRI">
    <property type="method" value="EM"/>
    <property type="resolution" value="2.40 A"/>
    <property type="chains" value="z=1-325"/>
</dbReference>
<dbReference type="PDBsum" id="7A5K"/>
<dbReference type="PDBsum" id="7QI4"/>
<dbReference type="PDBsum" id="7QI5"/>
<dbReference type="PDBsum" id="7QI6"/>
<dbReference type="PDBsum" id="8ANY"/>
<dbReference type="PDBsum" id="8OIR"/>
<dbReference type="PDBsum" id="8OIT"/>
<dbReference type="PDBsum" id="8RRI"/>
<dbReference type="EMDB" id="EMD-11646"/>
<dbReference type="EMDB" id="EMD-13980"/>
<dbReference type="EMDB" id="EMD-13981"/>
<dbReference type="EMDB" id="EMD-13982"/>
<dbReference type="EMDB" id="EMD-15544"/>
<dbReference type="EMDB" id="EMD-16897"/>
<dbReference type="EMDB" id="EMD-16899"/>
<dbReference type="EMDB" id="EMD-19460"/>
<dbReference type="SMR" id="Q9BYD6"/>
<dbReference type="BioGRID" id="122371">
    <property type="interactions" value="204"/>
</dbReference>
<dbReference type="ComplexPortal" id="CPX-5226">
    <property type="entry name" value="39S mitochondrial large ribosomal subunit"/>
</dbReference>
<dbReference type="CORUM" id="Q9BYD6"/>
<dbReference type="FunCoup" id="Q9BYD6">
    <property type="interactions" value="1047"/>
</dbReference>
<dbReference type="IntAct" id="Q9BYD6">
    <property type="interactions" value="125"/>
</dbReference>
<dbReference type="MINT" id="Q9BYD6"/>
<dbReference type="STRING" id="9606.ENSP00000315017"/>
<dbReference type="GlyGen" id="Q9BYD6">
    <property type="glycosylation" value="1 site, 1 O-linked glycan (1 site)"/>
</dbReference>
<dbReference type="iPTMnet" id="Q9BYD6"/>
<dbReference type="PhosphoSitePlus" id="Q9BYD6"/>
<dbReference type="SwissPalm" id="Q9BYD6"/>
<dbReference type="BioMuta" id="MRPL1"/>
<dbReference type="DMDM" id="239938694"/>
<dbReference type="jPOST" id="Q9BYD6"/>
<dbReference type="MassIVE" id="Q9BYD6"/>
<dbReference type="PaxDb" id="9606-ENSP00000315017"/>
<dbReference type="PeptideAtlas" id="Q9BYD6"/>
<dbReference type="ProteomicsDB" id="79621"/>
<dbReference type="Pumba" id="Q9BYD6"/>
<dbReference type="Antibodypedia" id="24877">
    <property type="antibodies" value="209 antibodies from 27 providers"/>
</dbReference>
<dbReference type="DNASU" id="65008"/>
<dbReference type="Ensembl" id="ENST00000315567.13">
    <property type="protein sequence ID" value="ENSP00000315017.8"/>
    <property type="gene ID" value="ENSG00000169288.18"/>
</dbReference>
<dbReference type="GeneID" id="65008"/>
<dbReference type="KEGG" id="hsa:65008"/>
<dbReference type="MANE-Select" id="ENST00000315567.13">
    <property type="protein sequence ID" value="ENSP00000315017.8"/>
    <property type="RefSeq nucleotide sequence ID" value="NM_020236.4"/>
    <property type="RefSeq protein sequence ID" value="NP_064621.3"/>
</dbReference>
<dbReference type="UCSC" id="uc003hku.3">
    <property type="organism name" value="human"/>
</dbReference>
<dbReference type="AGR" id="HGNC:14275"/>
<dbReference type="CTD" id="65008"/>
<dbReference type="DisGeNET" id="65008"/>
<dbReference type="GeneCards" id="MRPL1"/>
<dbReference type="HGNC" id="HGNC:14275">
    <property type="gene designation" value="MRPL1"/>
</dbReference>
<dbReference type="HPA" id="ENSG00000169288">
    <property type="expression patterns" value="Low tissue specificity"/>
</dbReference>
<dbReference type="MIM" id="611821">
    <property type="type" value="gene"/>
</dbReference>
<dbReference type="neXtProt" id="NX_Q9BYD6"/>
<dbReference type="OpenTargets" id="ENSG00000169288"/>
<dbReference type="PharmGKB" id="PA30938"/>
<dbReference type="VEuPathDB" id="HostDB:ENSG00000169288"/>
<dbReference type="eggNOG" id="KOG1569">
    <property type="taxonomic scope" value="Eukaryota"/>
</dbReference>
<dbReference type="GeneTree" id="ENSGT00940000162168"/>
<dbReference type="HOGENOM" id="CLU_074129_0_0_1"/>
<dbReference type="InParanoid" id="Q9BYD6"/>
<dbReference type="OMA" id="NVGTLDM"/>
<dbReference type="OrthoDB" id="1747252at2759"/>
<dbReference type="PAN-GO" id="Q9BYD6">
    <property type="GO annotations" value="3 GO annotations based on evolutionary models"/>
</dbReference>
<dbReference type="PhylomeDB" id="Q9BYD6"/>
<dbReference type="TreeFam" id="TF314989"/>
<dbReference type="PathwayCommons" id="Q9BYD6"/>
<dbReference type="Reactome" id="R-HSA-5368286">
    <property type="pathway name" value="Mitochondrial translation initiation"/>
</dbReference>
<dbReference type="Reactome" id="R-HSA-5389840">
    <property type="pathway name" value="Mitochondrial translation elongation"/>
</dbReference>
<dbReference type="Reactome" id="R-HSA-5419276">
    <property type="pathway name" value="Mitochondrial translation termination"/>
</dbReference>
<dbReference type="SignaLink" id="Q9BYD6"/>
<dbReference type="SIGNOR" id="Q9BYD6"/>
<dbReference type="BioGRID-ORCS" id="65008">
    <property type="hits" value="130 hits in 1160 CRISPR screens"/>
</dbReference>
<dbReference type="ChiTaRS" id="MRPL1">
    <property type="organism name" value="human"/>
</dbReference>
<dbReference type="GeneWiki" id="MRPL1"/>
<dbReference type="GenomeRNAi" id="65008"/>
<dbReference type="Pharos" id="Q9BYD6">
    <property type="development level" value="Tbio"/>
</dbReference>
<dbReference type="PRO" id="PR:Q9BYD6"/>
<dbReference type="Proteomes" id="UP000005640">
    <property type="component" value="Chromosome 4"/>
</dbReference>
<dbReference type="RNAct" id="Q9BYD6">
    <property type="molecule type" value="protein"/>
</dbReference>
<dbReference type="Bgee" id="ENSG00000169288">
    <property type="expression patterns" value="Expressed in left ventricle myocardium and 181 other cell types or tissues"/>
</dbReference>
<dbReference type="ExpressionAtlas" id="Q9BYD6">
    <property type="expression patterns" value="baseline and differential"/>
</dbReference>
<dbReference type="GO" id="GO:0005743">
    <property type="term" value="C:mitochondrial inner membrane"/>
    <property type="evidence" value="ECO:0000304"/>
    <property type="project" value="Reactome"/>
</dbReference>
<dbReference type="GO" id="GO:0005762">
    <property type="term" value="C:mitochondrial large ribosomal subunit"/>
    <property type="evidence" value="ECO:0000303"/>
    <property type="project" value="ComplexPortal"/>
</dbReference>
<dbReference type="GO" id="GO:0005739">
    <property type="term" value="C:mitochondrion"/>
    <property type="evidence" value="ECO:0006056"/>
    <property type="project" value="FlyBase"/>
</dbReference>
<dbReference type="GO" id="GO:0003723">
    <property type="term" value="F:RNA binding"/>
    <property type="evidence" value="ECO:0007005"/>
    <property type="project" value="UniProtKB"/>
</dbReference>
<dbReference type="GO" id="GO:0003735">
    <property type="term" value="F:structural constituent of ribosome"/>
    <property type="evidence" value="ECO:0007669"/>
    <property type="project" value="InterPro"/>
</dbReference>
<dbReference type="GO" id="GO:0032543">
    <property type="term" value="P:mitochondrial translation"/>
    <property type="evidence" value="ECO:0000303"/>
    <property type="project" value="ComplexPortal"/>
</dbReference>
<dbReference type="FunFam" id="3.40.50.790:FF:000003">
    <property type="entry name" value="39S ribosomal protein L1, mitochondrial"/>
    <property type="match status" value="1"/>
</dbReference>
<dbReference type="Gene3D" id="3.30.190.20">
    <property type="match status" value="1"/>
</dbReference>
<dbReference type="Gene3D" id="3.40.50.790">
    <property type="match status" value="1"/>
</dbReference>
<dbReference type="InterPro" id="IPR023674">
    <property type="entry name" value="Ribosomal_uL1-like"/>
</dbReference>
<dbReference type="InterPro" id="IPR028364">
    <property type="entry name" value="Ribosomal_uL1/biogenesis"/>
</dbReference>
<dbReference type="InterPro" id="IPR016095">
    <property type="entry name" value="Ribosomal_uL1_3-a/b-sand"/>
</dbReference>
<dbReference type="InterPro" id="IPR005879">
    <property type="entry name" value="Ribosomal_uL1_mit"/>
</dbReference>
<dbReference type="NCBIfam" id="TIGR01170">
    <property type="entry name" value="rplA_mito"/>
    <property type="match status" value="1"/>
</dbReference>
<dbReference type="PANTHER" id="PTHR36427">
    <property type="entry name" value="54S RIBOSOMAL PROTEIN L1, MITOCHONDRIAL"/>
    <property type="match status" value="1"/>
</dbReference>
<dbReference type="PANTHER" id="PTHR36427:SF3">
    <property type="entry name" value="LARGE RIBOSOMAL SUBUNIT PROTEIN UL1M"/>
    <property type="match status" value="1"/>
</dbReference>
<dbReference type="Pfam" id="PF00687">
    <property type="entry name" value="Ribosomal_L1"/>
    <property type="match status" value="1"/>
</dbReference>
<dbReference type="SUPFAM" id="SSF56808">
    <property type="entry name" value="Ribosomal protein L1"/>
    <property type="match status" value="1"/>
</dbReference>
<accession>Q9BYD6</accession>
<accession>A6NG03</accession>
<accession>Q4W5B8</accession>
<accession>Q6IAG4</accession>
<accession>Q96BW3</accession>
<accession>Q9H793</accession>
<accession>Q9NRL5</accession>
<proteinExistence type="evidence at protein level"/>
<feature type="transit peptide" description="Mitochondrion" evidence="2">
    <location>
        <begin position="1"/>
        <end position="50"/>
    </location>
</feature>
<feature type="chain" id="PRO_0000252440" description="Large ribosomal subunit protein uL1m">
    <location>
        <begin position="51"/>
        <end position="325"/>
    </location>
</feature>
<feature type="sequence variant" id="VAR_027865" description="In dbSNP:rs17851275." evidence="3">
    <original>T</original>
    <variation>K</variation>
    <location>
        <position position="47"/>
    </location>
</feature>
<feature type="sequence variant" id="VAR_027866" description="In dbSNP:rs17855456." evidence="3">
    <original>F</original>
    <variation>S</variation>
    <location>
        <position position="177"/>
    </location>
</feature>
<feature type="sequence conflict" description="In Ref. 7; BAB15005." evidence="5" ref="7">
    <original>D</original>
    <variation>N</variation>
    <location>
        <position position="85"/>
    </location>
</feature>
<feature type="sequence conflict" description="In Ref. 4; CAG33472." evidence="5" ref="4">
    <original>D</original>
    <variation>H</variation>
    <location>
        <position position="229"/>
    </location>
</feature>
<feature type="sequence conflict" description="In Ref. 7; BAB15005." evidence="5" ref="7">
    <original>D</original>
    <variation>G</variation>
    <location>
        <position position="265"/>
    </location>
</feature>
<comment type="subunit">
    <text evidence="1 6 7">Component of the mitochondrial large ribosomal subunit (mt-LSU) (PubMed:11279069). Mature mammalian 55S mitochondrial ribosomes consist of a small (28S) and a large (39S) subunit. The 28S small subunit contains a 12S ribosomal RNA (12S mt-rRNA) and 30 different proteins. The 39S large subunit contains a 16S rRNA (16S mt-rRNA), a copy of mitochondrial valine transfer RNA (mt-tRNA(Val)), which plays an integral structural role, and 52 different proteins (PubMed:25278503).</text>
</comment>
<comment type="interaction">
    <interactant intactId="EBI-5325394">
        <id>Q9BYD6</id>
    </interactant>
    <interactant intactId="EBI-349832">
        <id>Q9HD26</id>
        <label>GOPC</label>
    </interactant>
    <organismsDiffer>false</organismsDiffer>
    <experiments>3</experiments>
</comment>
<comment type="interaction">
    <interactant intactId="EBI-5325394">
        <id>Q9BYD6</id>
    </interactant>
    <interactant intactId="EBI-11946259">
        <id>Q8N0X2-4</id>
        <label>SPAG16</label>
    </interactant>
    <organismsDiffer>false</organismsDiffer>
    <experiments>3</experiments>
</comment>
<comment type="interaction">
    <interactant intactId="EBI-5325394">
        <id>Q9BYD6</id>
    </interactant>
    <interactant intactId="EBI-2799833">
        <id>Q8N1B4</id>
        <label>VPS52</label>
    </interactant>
    <organismsDiffer>false</organismsDiffer>
    <experiments>3</experiments>
</comment>
<comment type="subcellular location">
    <subcellularLocation>
        <location evidence="1 6">Mitochondrion</location>
    </subcellularLocation>
</comment>
<comment type="similarity">
    <text evidence="5">Belongs to the universal ribosomal protein uL1 family.</text>
</comment>
<comment type="sequence caution" evidence="5">
    <conflict type="erroneous initiation">
        <sequence resource="EMBL-CDS" id="AAF87327"/>
    </conflict>
    <text>Truncated N-terminus.</text>
</comment>
<comment type="sequence caution" evidence="5">
    <conflict type="frameshift">
        <sequence resource="EMBL-CDS" id="AAF87327"/>
    </conflict>
</comment>
<comment type="sequence caution" evidence="5">
    <conflict type="erroneous initiation">
        <sequence resource="EMBL-CDS" id="AAH14356"/>
    </conflict>
</comment>
<comment type="sequence caution" evidence="5">
    <conflict type="erroneous initiation">
        <sequence resource="EMBL-CDS" id="AAH15109"/>
    </conflict>
</comment>
<comment type="sequence caution" evidence="5">
    <conflict type="erroneous initiation">
        <sequence resource="EMBL-CDS" id="AAH32595"/>
    </conflict>
</comment>
<comment type="sequence caution" evidence="5">
    <conflict type="erroneous gene model prediction">
        <sequence resource="EMBL-CDS" id="AAY41057"/>
    </conflict>
</comment>
<comment type="sequence caution" evidence="5">
    <conflict type="erroneous initiation">
        <sequence resource="EMBL-CDS" id="BAB15005"/>
    </conflict>
</comment>
<comment type="sequence caution" evidence="5">
    <conflict type="erroneous initiation">
        <sequence resource="EMBL-CDS" id="BAB40180"/>
    </conflict>
    <text>Truncated N-terminus.</text>
</comment>
<comment type="sequence caution" evidence="5">
    <conflict type="frameshift">
        <sequence resource="EMBL-CDS" id="BAB40180"/>
    </conflict>
</comment>
<protein>
    <recommendedName>
        <fullName evidence="4">Large ribosomal subunit protein uL1m</fullName>
    </recommendedName>
    <alternativeName>
        <fullName>39S ribosomal protein L1, mitochondrial</fullName>
        <shortName>L1mt</shortName>
        <shortName>MRP-L1</shortName>
    </alternativeName>
</protein>
<sequence length="325" mass="36909">MAAAVRCMGRALIHHQRHSLSKMVYQTSLCSCSVNIRVPNRHFAAATKSAKKTKKGAKEKTPDEKKDEIEKIKAYPYMEGEPEDDVYLKRLYPRQIYEVEKAVHLLKKFQILDFTSPKQSVYLDLTLDMALGKKKNVEPFTSVLSLPYPFASEINKVAVFTENASEVKIAEENGAAFAGGTSLIQKIWDDEIVADFYVAVPEIMPELNRLRKKLNKKYPKLSRNSIGRDIPKMLELFKNGHEIKVDEERENFLQTKIATLDMSSDQIAANLQAVINEVCRHRPLNLGPFVVRAFLRSSTSEGLLLKIDPLLPKEVKNEESEKEDA</sequence>
<gene>
    <name type="primary">MRPL1</name>
    <name type="ORF">BM-022</name>
</gene>
<name>RM01_HUMAN</name>
<reference key="1">
    <citation type="submission" date="1999-12" db="EMBL/GenBank/DDBJ databases">
        <title>A novel gene expressed in human bone marrow.</title>
        <authorList>
            <person name="Zhao M."/>
            <person name="Song H."/>
            <person name="Li N."/>
            <person name="Peng Y."/>
            <person name="Han Z."/>
            <person name="Chen Z."/>
        </authorList>
    </citation>
    <scope>NUCLEOTIDE SEQUENCE [LARGE SCALE MRNA]</scope>
    <source>
        <tissue>Bone marrow</tissue>
    </source>
</reference>
<reference key="2">
    <citation type="journal article" date="2005" name="Nature">
        <title>Generation and annotation of the DNA sequences of human chromosomes 2 and 4.</title>
        <authorList>
            <person name="Hillier L.W."/>
            <person name="Graves T.A."/>
            <person name="Fulton R.S."/>
            <person name="Fulton L.A."/>
            <person name="Pepin K.H."/>
            <person name="Minx P."/>
            <person name="Wagner-McPherson C."/>
            <person name="Layman D."/>
            <person name="Wylie K."/>
            <person name="Sekhon M."/>
            <person name="Becker M.C."/>
            <person name="Fewell G.A."/>
            <person name="Delehaunty K.D."/>
            <person name="Miner T.L."/>
            <person name="Nash W.E."/>
            <person name="Kremitzki C."/>
            <person name="Oddy L."/>
            <person name="Du H."/>
            <person name="Sun H."/>
            <person name="Bradshaw-Cordum H."/>
            <person name="Ali J."/>
            <person name="Carter J."/>
            <person name="Cordes M."/>
            <person name="Harris A."/>
            <person name="Isak A."/>
            <person name="van Brunt A."/>
            <person name="Nguyen C."/>
            <person name="Du F."/>
            <person name="Courtney L."/>
            <person name="Kalicki J."/>
            <person name="Ozersky P."/>
            <person name="Abbott S."/>
            <person name="Armstrong J."/>
            <person name="Belter E.A."/>
            <person name="Caruso L."/>
            <person name="Cedroni M."/>
            <person name="Cotton M."/>
            <person name="Davidson T."/>
            <person name="Desai A."/>
            <person name="Elliott G."/>
            <person name="Erb T."/>
            <person name="Fronick C."/>
            <person name="Gaige T."/>
            <person name="Haakenson W."/>
            <person name="Haglund K."/>
            <person name="Holmes A."/>
            <person name="Harkins R."/>
            <person name="Kim K."/>
            <person name="Kruchowski S.S."/>
            <person name="Strong C.M."/>
            <person name="Grewal N."/>
            <person name="Goyea E."/>
            <person name="Hou S."/>
            <person name="Levy A."/>
            <person name="Martinka S."/>
            <person name="Mead K."/>
            <person name="McLellan M.D."/>
            <person name="Meyer R."/>
            <person name="Randall-Maher J."/>
            <person name="Tomlinson C."/>
            <person name="Dauphin-Kohlberg S."/>
            <person name="Kozlowicz-Reilly A."/>
            <person name="Shah N."/>
            <person name="Swearengen-Shahid S."/>
            <person name="Snider J."/>
            <person name="Strong J.T."/>
            <person name="Thompson J."/>
            <person name="Yoakum M."/>
            <person name="Leonard S."/>
            <person name="Pearman C."/>
            <person name="Trani L."/>
            <person name="Radionenko M."/>
            <person name="Waligorski J.E."/>
            <person name="Wang C."/>
            <person name="Rock S.M."/>
            <person name="Tin-Wollam A.-M."/>
            <person name="Maupin R."/>
            <person name="Latreille P."/>
            <person name="Wendl M.C."/>
            <person name="Yang S.-P."/>
            <person name="Pohl C."/>
            <person name="Wallis J.W."/>
            <person name="Spieth J."/>
            <person name="Bieri T.A."/>
            <person name="Berkowicz N."/>
            <person name="Nelson J.O."/>
            <person name="Osborne J."/>
            <person name="Ding L."/>
            <person name="Meyer R."/>
            <person name="Sabo A."/>
            <person name="Shotland Y."/>
            <person name="Sinha P."/>
            <person name="Wohldmann P.E."/>
            <person name="Cook L.L."/>
            <person name="Hickenbotham M.T."/>
            <person name="Eldred J."/>
            <person name="Williams D."/>
            <person name="Jones T.A."/>
            <person name="She X."/>
            <person name="Ciccarelli F.D."/>
            <person name="Izaurralde E."/>
            <person name="Taylor J."/>
            <person name="Schmutz J."/>
            <person name="Myers R.M."/>
            <person name="Cox D.R."/>
            <person name="Huang X."/>
            <person name="McPherson J.D."/>
            <person name="Mardis E.R."/>
            <person name="Clifton S.W."/>
            <person name="Warren W.C."/>
            <person name="Chinwalla A.T."/>
            <person name="Eddy S.R."/>
            <person name="Marra M.A."/>
            <person name="Ovcharenko I."/>
            <person name="Furey T.S."/>
            <person name="Miller W."/>
            <person name="Eichler E.E."/>
            <person name="Bork P."/>
            <person name="Suyama M."/>
            <person name="Torrents D."/>
            <person name="Waterston R.H."/>
            <person name="Wilson R.K."/>
        </authorList>
    </citation>
    <scope>NUCLEOTIDE SEQUENCE [LARGE SCALE GENOMIC DNA]</scope>
</reference>
<reference key="3">
    <citation type="submission" date="2005-07" db="EMBL/GenBank/DDBJ databases">
        <authorList>
            <person name="Mural R.J."/>
            <person name="Istrail S."/>
            <person name="Sutton G.G."/>
            <person name="Florea L."/>
            <person name="Halpern A.L."/>
            <person name="Mobarry C.M."/>
            <person name="Lippert R."/>
            <person name="Walenz B."/>
            <person name="Shatkay H."/>
            <person name="Dew I."/>
            <person name="Miller J.R."/>
            <person name="Flanigan M.J."/>
            <person name="Edwards N.J."/>
            <person name="Bolanos R."/>
            <person name="Fasulo D."/>
            <person name="Halldorsson B.V."/>
            <person name="Hannenhalli S."/>
            <person name="Turner R."/>
            <person name="Yooseph S."/>
            <person name="Lu F."/>
            <person name="Nusskern D.R."/>
            <person name="Shue B.C."/>
            <person name="Zheng X.H."/>
            <person name="Zhong F."/>
            <person name="Delcher A.L."/>
            <person name="Huson D.H."/>
            <person name="Kravitz S.A."/>
            <person name="Mouchard L."/>
            <person name="Reinert K."/>
            <person name="Remington K.A."/>
            <person name="Clark A.G."/>
            <person name="Waterman M.S."/>
            <person name="Eichler E.E."/>
            <person name="Adams M.D."/>
            <person name="Hunkapiller M.W."/>
            <person name="Myers E.W."/>
            <person name="Venter J.C."/>
        </authorList>
    </citation>
    <scope>NUCLEOTIDE SEQUENCE [LARGE SCALE GENOMIC DNA]</scope>
</reference>
<reference key="4">
    <citation type="journal article" date="2004" name="Genome Res.">
        <title>The status, quality, and expansion of the NIH full-length cDNA project: the Mammalian Gene Collection (MGC).</title>
        <authorList>
            <consortium name="The MGC Project Team"/>
        </authorList>
    </citation>
    <scope>NUCLEOTIDE SEQUENCE [LARGE SCALE MRNA]</scope>
    <scope>VARIANTS LYS-47 AND SER-177</scope>
    <source>
        <tissue>Bone marrow</tissue>
        <tissue>Skin</tissue>
    </source>
</reference>
<reference key="5">
    <citation type="journal article" date="2001" name="J. Biol. Chem.">
        <title>Structural compensation for the deficit of rRNA with proteins in the mammalian mitochondrial ribosome. Systematic analysis of protein components of the large ribosomal subunit from mammalian mitochondria.</title>
        <authorList>
            <person name="Suzuki T."/>
            <person name="Terasaki M."/>
            <person name="Takemoto-Hori C."/>
            <person name="Hanada T."/>
            <person name="Ueda T."/>
            <person name="Wada A."/>
            <person name="Watanabe K."/>
        </authorList>
    </citation>
    <scope>NUCLEOTIDE SEQUENCE [MRNA] OF 10-325</scope>
    <scope>SUBCELLULAR LOCATION</scope>
</reference>
<reference key="6">
    <citation type="submission" date="2004-06" db="EMBL/GenBank/DDBJ databases">
        <title>Cloning of human full open reading frames in Gateway(TM) system entry vector (pDONR201).</title>
        <authorList>
            <person name="Ebert L."/>
            <person name="Schick M."/>
            <person name="Neubert P."/>
            <person name="Schatten R."/>
            <person name="Henze S."/>
            <person name="Korn B."/>
        </authorList>
    </citation>
    <scope>NUCLEOTIDE SEQUENCE [LARGE SCALE MRNA] OF 23-325</scope>
</reference>
<reference key="7">
    <citation type="journal article" date="2004" name="Nat. Genet.">
        <title>Complete sequencing and characterization of 21,243 full-length human cDNAs.</title>
        <authorList>
            <person name="Ota T."/>
            <person name="Suzuki Y."/>
            <person name="Nishikawa T."/>
            <person name="Otsuki T."/>
            <person name="Sugiyama T."/>
            <person name="Irie R."/>
            <person name="Wakamatsu A."/>
            <person name="Hayashi K."/>
            <person name="Sato H."/>
            <person name="Nagai K."/>
            <person name="Kimura K."/>
            <person name="Makita H."/>
            <person name="Sekine M."/>
            <person name="Obayashi M."/>
            <person name="Nishi T."/>
            <person name="Shibahara T."/>
            <person name="Tanaka T."/>
            <person name="Ishii S."/>
            <person name="Yamamoto J."/>
            <person name="Saito K."/>
            <person name="Kawai Y."/>
            <person name="Isono Y."/>
            <person name="Nakamura Y."/>
            <person name="Nagahari K."/>
            <person name="Murakami K."/>
            <person name="Yasuda T."/>
            <person name="Iwayanagi T."/>
            <person name="Wagatsuma M."/>
            <person name="Shiratori A."/>
            <person name="Sudo H."/>
            <person name="Hosoiri T."/>
            <person name="Kaku Y."/>
            <person name="Kodaira H."/>
            <person name="Kondo H."/>
            <person name="Sugawara M."/>
            <person name="Takahashi M."/>
            <person name="Kanda K."/>
            <person name="Yokoi T."/>
            <person name="Furuya T."/>
            <person name="Kikkawa E."/>
            <person name="Omura Y."/>
            <person name="Abe K."/>
            <person name="Kamihara K."/>
            <person name="Katsuta N."/>
            <person name="Sato K."/>
            <person name="Tanikawa M."/>
            <person name="Yamazaki M."/>
            <person name="Ninomiya K."/>
            <person name="Ishibashi T."/>
            <person name="Yamashita H."/>
            <person name="Murakawa K."/>
            <person name="Fujimori K."/>
            <person name="Tanai H."/>
            <person name="Kimata M."/>
            <person name="Watanabe M."/>
            <person name="Hiraoka S."/>
            <person name="Chiba Y."/>
            <person name="Ishida S."/>
            <person name="Ono Y."/>
            <person name="Takiguchi S."/>
            <person name="Watanabe S."/>
            <person name="Yosida M."/>
            <person name="Hotuta T."/>
            <person name="Kusano J."/>
            <person name="Kanehori K."/>
            <person name="Takahashi-Fujii A."/>
            <person name="Hara H."/>
            <person name="Tanase T.-O."/>
            <person name="Nomura Y."/>
            <person name="Togiya S."/>
            <person name="Komai F."/>
            <person name="Hara R."/>
            <person name="Takeuchi K."/>
            <person name="Arita M."/>
            <person name="Imose N."/>
            <person name="Musashino K."/>
            <person name="Yuuki H."/>
            <person name="Oshima A."/>
            <person name="Sasaki N."/>
            <person name="Aotsuka S."/>
            <person name="Yoshikawa Y."/>
            <person name="Matsunawa H."/>
            <person name="Ichihara T."/>
            <person name="Shiohata N."/>
            <person name="Sano S."/>
            <person name="Moriya S."/>
            <person name="Momiyama H."/>
            <person name="Satoh N."/>
            <person name="Takami S."/>
            <person name="Terashima Y."/>
            <person name="Suzuki O."/>
            <person name="Nakagawa S."/>
            <person name="Senoh A."/>
            <person name="Mizoguchi H."/>
            <person name="Goto Y."/>
            <person name="Shimizu F."/>
            <person name="Wakebe H."/>
            <person name="Hishigaki H."/>
            <person name="Watanabe T."/>
            <person name="Sugiyama A."/>
            <person name="Takemoto M."/>
            <person name="Kawakami B."/>
            <person name="Yamazaki M."/>
            <person name="Watanabe K."/>
            <person name="Kumagai A."/>
            <person name="Itakura S."/>
            <person name="Fukuzumi Y."/>
            <person name="Fujimori Y."/>
            <person name="Komiyama M."/>
            <person name="Tashiro H."/>
            <person name="Tanigami A."/>
            <person name="Fujiwara T."/>
            <person name="Ono T."/>
            <person name="Yamada K."/>
            <person name="Fujii Y."/>
            <person name="Ozaki K."/>
            <person name="Hirao M."/>
            <person name="Ohmori Y."/>
            <person name="Kawabata A."/>
            <person name="Hikiji T."/>
            <person name="Kobatake N."/>
            <person name="Inagaki H."/>
            <person name="Ikema Y."/>
            <person name="Okamoto S."/>
            <person name="Okitani R."/>
            <person name="Kawakami T."/>
            <person name="Noguchi S."/>
            <person name="Itoh T."/>
            <person name="Shigeta K."/>
            <person name="Senba T."/>
            <person name="Matsumura K."/>
            <person name="Nakajima Y."/>
            <person name="Mizuno T."/>
            <person name="Morinaga M."/>
            <person name="Sasaki M."/>
            <person name="Togashi T."/>
            <person name="Oyama M."/>
            <person name="Hata H."/>
            <person name="Watanabe M."/>
            <person name="Komatsu T."/>
            <person name="Mizushima-Sugano J."/>
            <person name="Satoh T."/>
            <person name="Shirai Y."/>
            <person name="Takahashi Y."/>
            <person name="Nakagawa K."/>
            <person name="Okumura K."/>
            <person name="Nagase T."/>
            <person name="Nomura N."/>
            <person name="Kikuchi H."/>
            <person name="Masuho Y."/>
            <person name="Yamashita R."/>
            <person name="Nakai K."/>
            <person name="Yada T."/>
            <person name="Nakamura Y."/>
            <person name="Ohara O."/>
            <person name="Isogai T."/>
            <person name="Sugano S."/>
        </authorList>
    </citation>
    <scope>NUCLEOTIDE SEQUENCE [LARGE SCALE MRNA] OF 68-325</scope>
    <source>
        <tissue>Coronary artery</tissue>
    </source>
</reference>
<reference key="8">
    <citation type="journal article" date="2011" name="BMC Syst. Biol.">
        <title>Initial characterization of the human central proteome.</title>
        <authorList>
            <person name="Burkard T.R."/>
            <person name="Planyavsky M."/>
            <person name="Kaupe I."/>
            <person name="Breitwieser F.P."/>
            <person name="Buerckstuemmer T."/>
            <person name="Bennett K.L."/>
            <person name="Superti-Furga G."/>
            <person name="Colinge J."/>
        </authorList>
    </citation>
    <scope>IDENTIFICATION BY MASS SPECTROMETRY [LARGE SCALE ANALYSIS]</scope>
</reference>
<reference key="9">
    <citation type="journal article" date="2014" name="Science">
        <title>Structure of the large ribosomal subunit from human mitochondria.</title>
        <authorList>
            <person name="Brown A."/>
            <person name="Amunts A."/>
            <person name="Bai X.C."/>
            <person name="Sugimoto Y."/>
            <person name="Edwards P.C."/>
            <person name="Murshudov G."/>
            <person name="Scheres S.H."/>
            <person name="Ramakrishnan V."/>
        </authorList>
    </citation>
    <scope>NOMENCLATURE</scope>
</reference>
<reference key="10">
    <citation type="journal article" date="2015" name="Proteomics">
        <title>N-terminome analysis of the human mitochondrial proteome.</title>
        <authorList>
            <person name="Vaca Jacome A.S."/>
            <person name="Rabilloud T."/>
            <person name="Schaeffer-Reiss C."/>
            <person name="Rompais M."/>
            <person name="Ayoub D."/>
            <person name="Lane L."/>
            <person name="Bairoch A."/>
            <person name="Van Dorsselaer A."/>
            <person name="Carapito C."/>
        </authorList>
    </citation>
    <scope>IDENTIFICATION BY MASS SPECTROMETRY [LARGE SCALE ANALYSIS]</scope>
</reference>
<organism>
    <name type="scientific">Homo sapiens</name>
    <name type="common">Human</name>
    <dbReference type="NCBI Taxonomy" id="9606"/>
    <lineage>
        <taxon>Eukaryota</taxon>
        <taxon>Metazoa</taxon>
        <taxon>Chordata</taxon>
        <taxon>Craniata</taxon>
        <taxon>Vertebrata</taxon>
        <taxon>Euteleostomi</taxon>
        <taxon>Mammalia</taxon>
        <taxon>Eutheria</taxon>
        <taxon>Euarchontoglires</taxon>
        <taxon>Primates</taxon>
        <taxon>Haplorrhini</taxon>
        <taxon>Catarrhini</taxon>
        <taxon>Hominidae</taxon>
        <taxon>Homo</taxon>
    </lineage>
</organism>
<keyword id="KW-0002">3D-structure</keyword>
<keyword id="KW-0496">Mitochondrion</keyword>
<keyword id="KW-1267">Proteomics identification</keyword>
<keyword id="KW-1185">Reference proteome</keyword>
<keyword id="KW-0687">Ribonucleoprotein</keyword>
<keyword id="KW-0689">Ribosomal protein</keyword>
<keyword id="KW-0809">Transit peptide</keyword>